<sequence length="585" mass="65648">MGLRFPPKVLEHILSFIDSNEDRNSVSLVCKSWFETERKTRKRVFVGNCYAVSPAAVTRRFPEMRSLTLKGKPHFADYNLVPDGWGGYAWPWIEAMAAKSSSLEEIRMKRMVVTDECLEKIAASFKDFKVLVLTSCEGFSTDGIAAIAATCRNLRVLELRECIVEDLGGDWLSYFPESSTSLVSLDFSCLDSEVKISDLERLVSRSPNLKSLKLNPAVTLDGLVSLLRCAPQLTELGTGSFAAQLKPEAFSKLSEAFSNCKQLQSLSGLWDVLPEYLPALYSVCPGLTSLNLSYATVRMPDLVELLRRCSKLQKLWVMDLIEDKGLEAVASYCKELRELRVFPSEPDLDATNIPLTEQGLVFVSKGCRKLESVLYFCVQFTNAALFTIARKRPNLKCFRLCVIEPFAPDYKTNEPLDKGFKAIAEGCRDLRRLSVSGLLSDKAFKYIGKHAKKVRMLSIAFAGDSDLMLHHLLSGCESLKKLEIRDCPFGDTALLEHAAKLETMRSLWMSSCFVSFGACKLLSQKMPRLNVEVIDEHPPESRPESSPVERIYIYRTVAGPRMDTPEFVWTIHKNPENGVSHLAIK</sequence>
<name>GRH1_ARATH</name>
<dbReference type="EMBL" id="AF291816">
    <property type="protein sequence ID" value="AAK01147.1"/>
    <property type="molecule type" value="mRNA"/>
</dbReference>
<dbReference type="EMBL" id="AC005275">
    <property type="protein sequence ID" value="AAD14447.1"/>
    <property type="molecule type" value="Genomic_DNA"/>
</dbReference>
<dbReference type="EMBL" id="AL161496">
    <property type="protein sequence ID" value="CAB77804.1"/>
    <property type="molecule type" value="Genomic_DNA"/>
</dbReference>
<dbReference type="EMBL" id="CP002687">
    <property type="protein sequence ID" value="AEE82287.1"/>
    <property type="molecule type" value="Genomic_DNA"/>
</dbReference>
<dbReference type="EMBL" id="AY045799">
    <property type="protein sequence ID" value="AAK76473.1"/>
    <property type="molecule type" value="mRNA"/>
</dbReference>
<dbReference type="EMBL" id="AY150427">
    <property type="protein sequence ID" value="AAN12969.1"/>
    <property type="molecule type" value="mRNA"/>
</dbReference>
<dbReference type="PIR" id="E85040">
    <property type="entry name" value="E85040"/>
</dbReference>
<dbReference type="RefSeq" id="NP_567255.1">
    <property type="nucleotide sequence ID" value="NM_116555.4"/>
</dbReference>
<dbReference type="SMR" id="Q9ZR12"/>
<dbReference type="BioGRID" id="13336">
    <property type="interactions" value="13"/>
</dbReference>
<dbReference type="DIP" id="DIP-34607N"/>
<dbReference type="FunCoup" id="Q9ZR12">
    <property type="interactions" value="24"/>
</dbReference>
<dbReference type="IntAct" id="Q9ZR12">
    <property type="interactions" value="9"/>
</dbReference>
<dbReference type="STRING" id="3702.Q9ZR12"/>
<dbReference type="iPTMnet" id="Q9ZR12"/>
<dbReference type="PaxDb" id="3702-AT4G03190.1"/>
<dbReference type="ProteomicsDB" id="247039"/>
<dbReference type="EnsemblPlants" id="AT4G03190.1">
    <property type="protein sequence ID" value="AT4G03190.1"/>
    <property type="gene ID" value="AT4G03190"/>
</dbReference>
<dbReference type="GeneID" id="828045"/>
<dbReference type="Gramene" id="AT4G03190.1">
    <property type="protein sequence ID" value="AT4G03190.1"/>
    <property type="gene ID" value="AT4G03190"/>
</dbReference>
<dbReference type="KEGG" id="ath:AT4G03190"/>
<dbReference type="Araport" id="AT4G03190"/>
<dbReference type="TAIR" id="AT4G03190">
    <property type="gene designation" value="GRH1"/>
</dbReference>
<dbReference type="eggNOG" id="KOG1947">
    <property type="taxonomic scope" value="Eukaryota"/>
</dbReference>
<dbReference type="HOGENOM" id="CLU_022456_1_0_1"/>
<dbReference type="InParanoid" id="Q9ZR12"/>
<dbReference type="OMA" id="CVIEPFA"/>
<dbReference type="OrthoDB" id="423607at2759"/>
<dbReference type="PhylomeDB" id="Q9ZR12"/>
<dbReference type="UniPathway" id="UPA00143"/>
<dbReference type="PRO" id="PR:Q9ZR12"/>
<dbReference type="Proteomes" id="UP000006548">
    <property type="component" value="Chromosome 4"/>
</dbReference>
<dbReference type="ExpressionAtlas" id="Q9ZR12">
    <property type="expression patterns" value="baseline and differential"/>
</dbReference>
<dbReference type="GO" id="GO:0043224">
    <property type="term" value="C:nuclear SCF ubiquitin ligase complex"/>
    <property type="evidence" value="ECO:0000314"/>
    <property type="project" value="TAIR"/>
</dbReference>
<dbReference type="GO" id="GO:0005634">
    <property type="term" value="C:nucleus"/>
    <property type="evidence" value="ECO:0000314"/>
    <property type="project" value="TAIR"/>
</dbReference>
<dbReference type="GO" id="GO:0019005">
    <property type="term" value="C:SCF ubiquitin ligase complex"/>
    <property type="evidence" value="ECO:0000250"/>
    <property type="project" value="UniProtKB"/>
</dbReference>
<dbReference type="GO" id="GO:0010011">
    <property type="term" value="F:auxin binding"/>
    <property type="evidence" value="ECO:0000316"/>
    <property type="project" value="TAIR"/>
</dbReference>
<dbReference type="GO" id="GO:0000822">
    <property type="term" value="F:inositol hexakisphosphate binding"/>
    <property type="evidence" value="ECO:0000250"/>
    <property type="project" value="UniProtKB"/>
</dbReference>
<dbReference type="GO" id="GO:0004842">
    <property type="term" value="F:ubiquitin-protein transferase activity"/>
    <property type="evidence" value="ECO:0000250"/>
    <property type="project" value="TAIR"/>
</dbReference>
<dbReference type="GO" id="GO:0009734">
    <property type="term" value="P:auxin-activated signaling pathway"/>
    <property type="evidence" value="ECO:0000250"/>
    <property type="project" value="UniProtKB"/>
</dbReference>
<dbReference type="GO" id="GO:0045014">
    <property type="term" value="P:carbon catabolite repression of transcription by glucose"/>
    <property type="evidence" value="ECO:0000304"/>
    <property type="project" value="TAIR"/>
</dbReference>
<dbReference type="GO" id="GO:0006952">
    <property type="term" value="P:defense response"/>
    <property type="evidence" value="ECO:0007669"/>
    <property type="project" value="UniProtKB-KW"/>
</dbReference>
<dbReference type="GO" id="GO:0010152">
    <property type="term" value="P:pollen maturation"/>
    <property type="evidence" value="ECO:0000316"/>
    <property type="project" value="TAIR"/>
</dbReference>
<dbReference type="GO" id="GO:0016567">
    <property type="term" value="P:protein ubiquitination"/>
    <property type="evidence" value="ECO:0007669"/>
    <property type="project" value="UniProtKB-UniPathway"/>
</dbReference>
<dbReference type="GO" id="GO:0009733">
    <property type="term" value="P:response to auxin"/>
    <property type="evidence" value="ECO:0000315"/>
    <property type="project" value="TAIR"/>
</dbReference>
<dbReference type="CDD" id="cd22159">
    <property type="entry name" value="F-box_AtTIR1-like"/>
    <property type="match status" value="1"/>
</dbReference>
<dbReference type="FunFam" id="1.20.1280.50:FF:000006">
    <property type="entry name" value="Transport inhibitor response 1"/>
    <property type="match status" value="1"/>
</dbReference>
<dbReference type="FunFam" id="3.80.10.10:FF:000029">
    <property type="entry name" value="Transport inhibitor response 1"/>
    <property type="match status" value="1"/>
</dbReference>
<dbReference type="Gene3D" id="1.20.1280.50">
    <property type="match status" value="1"/>
</dbReference>
<dbReference type="Gene3D" id="3.80.10.10">
    <property type="entry name" value="Ribonuclease Inhibitor"/>
    <property type="match status" value="1"/>
</dbReference>
<dbReference type="InterPro" id="IPR041567">
    <property type="entry name" value="COI1_F-box"/>
</dbReference>
<dbReference type="InterPro" id="IPR001810">
    <property type="entry name" value="F-box_dom"/>
</dbReference>
<dbReference type="InterPro" id="IPR006553">
    <property type="entry name" value="Leu-rich_rpt_Cys-con_subtyp"/>
</dbReference>
<dbReference type="InterPro" id="IPR032675">
    <property type="entry name" value="LRR_dom_sf"/>
</dbReference>
<dbReference type="InterPro" id="IPR041101">
    <property type="entry name" value="Transp_inhibit"/>
</dbReference>
<dbReference type="PANTHER" id="PTHR16134">
    <property type="entry name" value="F-BOX/TPR REPEAT PROTEIN POF3"/>
    <property type="match status" value="1"/>
</dbReference>
<dbReference type="PANTHER" id="PTHR16134:SF50">
    <property type="entry name" value="GRR1-LIKE PROTEIN 1"/>
    <property type="match status" value="1"/>
</dbReference>
<dbReference type="Pfam" id="PF18511">
    <property type="entry name" value="F-box_5"/>
    <property type="match status" value="1"/>
</dbReference>
<dbReference type="Pfam" id="PF18791">
    <property type="entry name" value="Transp_inhibit"/>
    <property type="match status" value="1"/>
</dbReference>
<dbReference type="SMART" id="SM00256">
    <property type="entry name" value="FBOX"/>
    <property type="match status" value="1"/>
</dbReference>
<dbReference type="SMART" id="SM00367">
    <property type="entry name" value="LRR_CC"/>
    <property type="match status" value="6"/>
</dbReference>
<dbReference type="SUPFAM" id="SSF52047">
    <property type="entry name" value="RNI-like"/>
    <property type="match status" value="1"/>
</dbReference>
<reference key="1">
    <citation type="journal article" date="2002" name="Plant Mol. Biol.">
        <title>Cloning by pathway activation in yeast: identification of an Arabidopsis thaliana F-box protein that can turn on glucose repression.</title>
        <authorList>
            <person name="Thelander M."/>
            <person name="Fredriksson D."/>
            <person name="Schouten J."/>
            <person name="Hoge J.H.C."/>
            <person name="Ronne H."/>
        </authorList>
    </citation>
    <scope>NUCLEOTIDE SEQUENCE [MRNA]</scope>
    <scope>FUNCTION</scope>
    <scope>INTERACTION WITH SKP1A/ASK1 AND SKP1B/ASK2</scope>
    <scope>LEUCINE-RICH REPEATS</scope>
</reference>
<reference key="2">
    <citation type="journal article" date="1999" name="Nature">
        <title>Sequence and analysis of chromosome 4 of the plant Arabidopsis thaliana.</title>
        <authorList>
            <person name="Mayer K.F.X."/>
            <person name="Schueller C."/>
            <person name="Wambutt R."/>
            <person name="Murphy G."/>
            <person name="Volckaert G."/>
            <person name="Pohl T."/>
            <person name="Duesterhoeft A."/>
            <person name="Stiekema W."/>
            <person name="Entian K.-D."/>
            <person name="Terryn N."/>
            <person name="Harris B."/>
            <person name="Ansorge W."/>
            <person name="Brandt P."/>
            <person name="Grivell L.A."/>
            <person name="Rieger M."/>
            <person name="Weichselgartner M."/>
            <person name="de Simone V."/>
            <person name="Obermaier B."/>
            <person name="Mache R."/>
            <person name="Mueller M."/>
            <person name="Kreis M."/>
            <person name="Delseny M."/>
            <person name="Puigdomenech P."/>
            <person name="Watson M."/>
            <person name="Schmidtheini T."/>
            <person name="Reichert B."/>
            <person name="Portetelle D."/>
            <person name="Perez-Alonso M."/>
            <person name="Boutry M."/>
            <person name="Bancroft I."/>
            <person name="Vos P."/>
            <person name="Hoheisel J."/>
            <person name="Zimmermann W."/>
            <person name="Wedler H."/>
            <person name="Ridley P."/>
            <person name="Langham S.-A."/>
            <person name="McCullagh B."/>
            <person name="Bilham L."/>
            <person name="Robben J."/>
            <person name="van der Schueren J."/>
            <person name="Grymonprez B."/>
            <person name="Chuang Y.-J."/>
            <person name="Vandenbussche F."/>
            <person name="Braeken M."/>
            <person name="Weltjens I."/>
            <person name="Voet M."/>
            <person name="Bastiaens I."/>
            <person name="Aert R."/>
            <person name="Defoor E."/>
            <person name="Weitzenegger T."/>
            <person name="Bothe G."/>
            <person name="Ramsperger U."/>
            <person name="Hilbert H."/>
            <person name="Braun M."/>
            <person name="Holzer E."/>
            <person name="Brandt A."/>
            <person name="Peters S."/>
            <person name="van Staveren M."/>
            <person name="Dirkse W."/>
            <person name="Mooijman P."/>
            <person name="Klein Lankhorst R."/>
            <person name="Rose M."/>
            <person name="Hauf J."/>
            <person name="Koetter P."/>
            <person name="Berneiser S."/>
            <person name="Hempel S."/>
            <person name="Feldpausch M."/>
            <person name="Lamberth S."/>
            <person name="Van den Daele H."/>
            <person name="De Keyser A."/>
            <person name="Buysshaert C."/>
            <person name="Gielen J."/>
            <person name="Villarroel R."/>
            <person name="De Clercq R."/>
            <person name="van Montagu M."/>
            <person name="Rogers J."/>
            <person name="Cronin A."/>
            <person name="Quail M.A."/>
            <person name="Bray-Allen S."/>
            <person name="Clark L."/>
            <person name="Doggett J."/>
            <person name="Hall S."/>
            <person name="Kay M."/>
            <person name="Lennard N."/>
            <person name="McLay K."/>
            <person name="Mayes R."/>
            <person name="Pettett A."/>
            <person name="Rajandream M.A."/>
            <person name="Lyne M."/>
            <person name="Benes V."/>
            <person name="Rechmann S."/>
            <person name="Borkova D."/>
            <person name="Bloecker H."/>
            <person name="Scharfe M."/>
            <person name="Grimm M."/>
            <person name="Loehnert T.-H."/>
            <person name="Dose S."/>
            <person name="de Haan M."/>
            <person name="Maarse A.C."/>
            <person name="Schaefer M."/>
            <person name="Mueller-Auer S."/>
            <person name="Gabel C."/>
            <person name="Fuchs M."/>
            <person name="Fartmann B."/>
            <person name="Granderath K."/>
            <person name="Dauner D."/>
            <person name="Herzl A."/>
            <person name="Neumann S."/>
            <person name="Argiriou A."/>
            <person name="Vitale D."/>
            <person name="Liguori R."/>
            <person name="Piravandi E."/>
            <person name="Massenet O."/>
            <person name="Quigley F."/>
            <person name="Clabauld G."/>
            <person name="Muendlein A."/>
            <person name="Felber R."/>
            <person name="Schnabl S."/>
            <person name="Hiller R."/>
            <person name="Schmidt W."/>
            <person name="Lecharny A."/>
            <person name="Aubourg S."/>
            <person name="Chefdor F."/>
            <person name="Cooke R."/>
            <person name="Berger C."/>
            <person name="Monfort A."/>
            <person name="Casacuberta E."/>
            <person name="Gibbons T."/>
            <person name="Weber N."/>
            <person name="Vandenbol M."/>
            <person name="Bargues M."/>
            <person name="Terol J."/>
            <person name="Torres A."/>
            <person name="Perez-Perez A."/>
            <person name="Purnelle B."/>
            <person name="Bent E."/>
            <person name="Johnson S."/>
            <person name="Tacon D."/>
            <person name="Jesse T."/>
            <person name="Heijnen L."/>
            <person name="Schwarz S."/>
            <person name="Scholler P."/>
            <person name="Heber S."/>
            <person name="Francs P."/>
            <person name="Bielke C."/>
            <person name="Frishman D."/>
            <person name="Haase D."/>
            <person name="Lemcke K."/>
            <person name="Mewes H.-W."/>
            <person name="Stocker S."/>
            <person name="Zaccaria P."/>
            <person name="Bevan M."/>
            <person name="Wilson R.K."/>
            <person name="de la Bastide M."/>
            <person name="Habermann K."/>
            <person name="Parnell L."/>
            <person name="Dedhia N."/>
            <person name="Gnoj L."/>
            <person name="Schutz K."/>
            <person name="Huang E."/>
            <person name="Spiegel L."/>
            <person name="Sekhon M."/>
            <person name="Murray J."/>
            <person name="Sheet P."/>
            <person name="Cordes M."/>
            <person name="Abu-Threideh J."/>
            <person name="Stoneking T."/>
            <person name="Kalicki J."/>
            <person name="Graves T."/>
            <person name="Harmon G."/>
            <person name="Edwards J."/>
            <person name="Latreille P."/>
            <person name="Courtney L."/>
            <person name="Cloud J."/>
            <person name="Abbott A."/>
            <person name="Scott K."/>
            <person name="Johnson D."/>
            <person name="Minx P."/>
            <person name="Bentley D."/>
            <person name="Fulton B."/>
            <person name="Miller N."/>
            <person name="Greco T."/>
            <person name="Kemp K."/>
            <person name="Kramer J."/>
            <person name="Fulton L."/>
            <person name="Mardis E."/>
            <person name="Dante M."/>
            <person name="Pepin K."/>
            <person name="Hillier L.W."/>
            <person name="Nelson J."/>
            <person name="Spieth J."/>
            <person name="Ryan E."/>
            <person name="Andrews S."/>
            <person name="Geisel C."/>
            <person name="Layman D."/>
            <person name="Du H."/>
            <person name="Ali J."/>
            <person name="Berghoff A."/>
            <person name="Jones K."/>
            <person name="Drone K."/>
            <person name="Cotton M."/>
            <person name="Joshu C."/>
            <person name="Antonoiu B."/>
            <person name="Zidanic M."/>
            <person name="Strong C."/>
            <person name="Sun H."/>
            <person name="Lamar B."/>
            <person name="Yordan C."/>
            <person name="Ma P."/>
            <person name="Zhong J."/>
            <person name="Preston R."/>
            <person name="Vil D."/>
            <person name="Shekher M."/>
            <person name="Matero A."/>
            <person name="Shah R."/>
            <person name="Swaby I.K."/>
            <person name="O'Shaughnessy A."/>
            <person name="Rodriguez M."/>
            <person name="Hoffman J."/>
            <person name="Till S."/>
            <person name="Granat S."/>
            <person name="Shohdy N."/>
            <person name="Hasegawa A."/>
            <person name="Hameed A."/>
            <person name="Lodhi M."/>
            <person name="Johnson A."/>
            <person name="Chen E."/>
            <person name="Marra M.A."/>
            <person name="Martienssen R."/>
            <person name="McCombie W.R."/>
        </authorList>
    </citation>
    <scope>NUCLEOTIDE SEQUENCE [LARGE SCALE GENOMIC DNA]</scope>
    <source>
        <strain>cv. Columbia</strain>
    </source>
</reference>
<reference key="3">
    <citation type="journal article" date="2017" name="Plant J.">
        <title>Araport11: a complete reannotation of the Arabidopsis thaliana reference genome.</title>
        <authorList>
            <person name="Cheng C.Y."/>
            <person name="Krishnakumar V."/>
            <person name="Chan A.P."/>
            <person name="Thibaud-Nissen F."/>
            <person name="Schobel S."/>
            <person name="Town C.D."/>
        </authorList>
    </citation>
    <scope>GENOME REANNOTATION</scope>
    <source>
        <strain>cv. Columbia</strain>
    </source>
</reference>
<reference key="4">
    <citation type="journal article" date="2003" name="Science">
        <title>Empirical analysis of transcriptional activity in the Arabidopsis genome.</title>
        <authorList>
            <person name="Yamada K."/>
            <person name="Lim J."/>
            <person name="Dale J.M."/>
            <person name="Chen H."/>
            <person name="Shinn P."/>
            <person name="Palm C.J."/>
            <person name="Southwick A.M."/>
            <person name="Wu H.C."/>
            <person name="Kim C.J."/>
            <person name="Nguyen M."/>
            <person name="Pham P.K."/>
            <person name="Cheuk R.F."/>
            <person name="Karlin-Newmann G."/>
            <person name="Liu S.X."/>
            <person name="Lam B."/>
            <person name="Sakano H."/>
            <person name="Wu T."/>
            <person name="Yu G."/>
            <person name="Miranda M."/>
            <person name="Quach H.L."/>
            <person name="Tripp M."/>
            <person name="Chang C.H."/>
            <person name="Lee J.M."/>
            <person name="Toriumi M.J."/>
            <person name="Chan M.M."/>
            <person name="Tang C.C."/>
            <person name="Onodera C.S."/>
            <person name="Deng J.M."/>
            <person name="Akiyama K."/>
            <person name="Ansari Y."/>
            <person name="Arakawa T."/>
            <person name="Banh J."/>
            <person name="Banno F."/>
            <person name="Bowser L."/>
            <person name="Brooks S.Y."/>
            <person name="Carninci P."/>
            <person name="Chao Q."/>
            <person name="Choy N."/>
            <person name="Enju A."/>
            <person name="Goldsmith A.D."/>
            <person name="Gurjal M."/>
            <person name="Hansen N.F."/>
            <person name="Hayashizaki Y."/>
            <person name="Johnson-Hopson C."/>
            <person name="Hsuan V.W."/>
            <person name="Iida K."/>
            <person name="Karnes M."/>
            <person name="Khan S."/>
            <person name="Koesema E."/>
            <person name="Ishida J."/>
            <person name="Jiang P.X."/>
            <person name="Jones T."/>
            <person name="Kawai J."/>
            <person name="Kamiya A."/>
            <person name="Meyers C."/>
            <person name="Nakajima M."/>
            <person name="Narusaka M."/>
            <person name="Seki M."/>
            <person name="Sakurai T."/>
            <person name="Satou M."/>
            <person name="Tamse R."/>
            <person name="Vaysberg M."/>
            <person name="Wallender E.K."/>
            <person name="Wong C."/>
            <person name="Yamamura Y."/>
            <person name="Yuan S."/>
            <person name="Shinozaki K."/>
            <person name="Davis R.W."/>
            <person name="Theologis A."/>
            <person name="Ecker J.R."/>
        </authorList>
    </citation>
    <scope>NUCLEOTIDE SEQUENCE [LARGE SCALE MRNA]</scope>
    <source>
        <strain>cv. Columbia</strain>
    </source>
</reference>
<reference key="5">
    <citation type="journal article" date="1999" name="Genes Dev.">
        <title>Identification of an SCF ubiquitin-ligase complex required for auxin response in Arabidopsis thaliana.</title>
        <authorList>
            <person name="Gray W.M."/>
            <person name="del Pozo J.C."/>
            <person name="Walker L."/>
            <person name="Hobbie L."/>
            <person name="Risseeuw E."/>
            <person name="Banks T."/>
            <person name="Crosby W.L."/>
            <person name="Yang M."/>
            <person name="Ma H."/>
            <person name="Estelle M."/>
        </authorList>
    </citation>
    <scope>INTERACTION WITH SKP1A/ASK1 AND SKP1B/ASK2</scope>
</reference>
<reference key="6">
    <citation type="journal article" date="2000" name="Trends Plant Sci.">
        <title>F-box proteins in Arabidopsis.</title>
        <authorList>
            <person name="Xiao W."/>
            <person name="Jang J.-C."/>
        </authorList>
    </citation>
    <scope>GENE FAMILY</scope>
    <scope>NOMENCLATURE</scope>
</reference>
<reference key="7">
    <citation type="journal article" date="2005" name="Dev. Cell">
        <title>Plant development is regulated by a family of auxin receptor F box proteins.</title>
        <authorList>
            <person name="Dharmasiri N."/>
            <person name="Dharmasiri S."/>
            <person name="Weijers D."/>
            <person name="Lechner E."/>
            <person name="Yamada M."/>
            <person name="Hobbie L."/>
            <person name="Ehrismann J.S."/>
            <person name="Juergens G."/>
            <person name="Estelle M."/>
        </authorList>
    </citation>
    <scope>FUNCTION</scope>
    <scope>TISSUE SPECIFICITY</scope>
    <scope>SUBCELLULAR LOCATION</scope>
    <scope>INTERACTION WITH CUL1; IAA7; IAA12 AND SKP1A/ASK1</scope>
</reference>
<reference key="8">
    <citation type="journal article" date="2005" name="Nature">
        <title>The F-box protein TIR1 is an auxin receptor.</title>
        <authorList>
            <person name="Dharmasiri N."/>
            <person name="Dharmasiri S."/>
            <person name="Estelle M."/>
        </authorList>
    </citation>
    <scope>FUNCTION</scope>
</reference>
<reference key="9">
    <citation type="journal article" date="2006" name="Science">
        <title>A plant miRNA contributes to antibacterial resistance by repressing auxin signaling.</title>
        <authorList>
            <person name="Navarro L."/>
            <person name="Dunoyer P."/>
            <person name="Jay F."/>
            <person name="Arnold B."/>
            <person name="Dharmasiri N."/>
            <person name="Estelle M."/>
            <person name="Voinnet O."/>
            <person name="Jones J.D.G."/>
        </authorList>
    </citation>
    <scope>FUNCTION</scope>
    <scope>INDUCTION</scope>
</reference>
<keyword id="KW-0927">Auxin signaling pathway</keyword>
<keyword id="KW-0217">Developmental protein</keyword>
<keyword id="KW-0539">Nucleus</keyword>
<keyword id="KW-0611">Plant defense</keyword>
<keyword id="KW-1185">Reference proteome</keyword>
<keyword id="KW-0833">Ubl conjugation pathway</keyword>
<accession>Q9ZR12</accession>
<accession>Q94AU0</accession>
<accession>Q9C5Y7</accession>
<comment type="function">
    <text evidence="3 4 5 6">Component of SCF(ASK-cullin-F-box) E3 ubiquitin ligase complexes, which may mediate the ubiquitination and subsequent proteasomal degradation of target proteins. Auxin receptor that mediates Aux/IAA proteins proteasomal degradation and auxin-regulated transcription. Involved in embryogenesis regulation by auxin. Confers sensitivity to the virulent bacterial pathogen P.syringae. Mediates glucose repression in yeast.</text>
</comment>
<comment type="pathway">
    <text>Protein modification; protein ubiquitination.</text>
</comment>
<comment type="subunit">
    <text evidence="2 3 5">Part of a SCF (SKP1-cullin-F-box) protein ligase complex. Interacts with CUL1, SKP1A/ASK1 and SKP1B/ASK2. Interacts with Aux/IAA proteins (IAA7 and IAA12) in an auxin-dependent manner.</text>
</comment>
<comment type="interaction">
    <interactant intactId="EBI-617479">
        <id>Q9ZR12</id>
    </interactant>
    <interactant intactId="EBI-602959">
        <id>Q38825</id>
        <label>IAA7</label>
    </interactant>
    <organismsDiffer>false</organismsDiffer>
    <experiments>2</experiments>
</comment>
<comment type="interaction">
    <interactant intactId="EBI-617479">
        <id>Q9ZR12</id>
    </interactant>
    <interactant intactId="EBI-532357">
        <id>Q39255</id>
        <label>SKP1A</label>
    </interactant>
    <organismsDiffer>false</organismsDiffer>
    <experiments>3</experiments>
</comment>
<comment type="subcellular location">
    <subcellularLocation>
        <location evidence="5">Nucleus</location>
    </subcellularLocation>
</comment>
<comment type="tissue specificity">
    <text evidence="5">Ubiquitous.</text>
</comment>
<comment type="induction">
    <text evidence="6">Partially repressed by miR393a (microRNA) in response to flg-22 (flagellin-derived peptide 22).</text>
</comment>
<comment type="domain">
    <text evidence="1">The F-box is necessary for the interaction with SKP1.</text>
</comment>
<organism>
    <name type="scientific">Arabidopsis thaliana</name>
    <name type="common">Mouse-ear cress</name>
    <dbReference type="NCBI Taxonomy" id="3702"/>
    <lineage>
        <taxon>Eukaryota</taxon>
        <taxon>Viridiplantae</taxon>
        <taxon>Streptophyta</taxon>
        <taxon>Embryophyta</taxon>
        <taxon>Tracheophyta</taxon>
        <taxon>Spermatophyta</taxon>
        <taxon>Magnoliopsida</taxon>
        <taxon>eudicotyledons</taxon>
        <taxon>Gunneridae</taxon>
        <taxon>Pentapetalae</taxon>
        <taxon>rosids</taxon>
        <taxon>malvids</taxon>
        <taxon>Brassicales</taxon>
        <taxon>Brassicaceae</taxon>
        <taxon>Camelineae</taxon>
        <taxon>Arabidopsis</taxon>
    </lineage>
</organism>
<protein>
    <recommendedName>
        <fullName>GRR1-like protein 1</fullName>
    </recommendedName>
    <alternativeName>
        <fullName>Protein AUXIN SIGNALING F-BOX 1</fullName>
    </alternativeName>
</protein>
<feature type="chain" id="PRO_0000272265" description="GRR1-like protein 1">
    <location>
        <begin position="1"/>
        <end position="585"/>
    </location>
</feature>
<feature type="domain" description="F-box">
    <location>
        <begin position="1"/>
        <end position="48"/>
    </location>
</feature>
<feature type="region of interest" description="Interaction with auxin-responsive proteins" evidence="1">
    <location>
        <begin position="77"/>
        <end position="78"/>
    </location>
</feature>
<feature type="region of interest" description="Interaction with auxin-responsive proteins" evidence="1">
    <location>
        <begin position="343"/>
        <end position="348"/>
    </location>
</feature>
<feature type="region of interest" description="Interaction with auxin-responsive proteins" evidence="1">
    <location>
        <begin position="401"/>
        <end position="405"/>
    </location>
</feature>
<feature type="region of interest" description="Interaction with auxin-responsive proteins" evidence="1">
    <location>
        <begin position="460"/>
        <end position="461"/>
    </location>
</feature>
<feature type="binding site" evidence="1">
    <location>
        <position position="70"/>
    </location>
    <ligand>
        <name>1D-myo-inositol hexakisphosphate</name>
        <dbReference type="ChEBI" id="CHEBI:58130"/>
    </ligand>
</feature>
<feature type="binding site" evidence="1">
    <location>
        <begin position="109"/>
        <end position="110"/>
    </location>
    <ligand>
        <name>1D-myo-inositol hexakisphosphate</name>
        <dbReference type="ChEBI" id="CHEBI:58130"/>
    </ligand>
</feature>
<feature type="binding site" evidence="1">
    <location>
        <position position="340"/>
    </location>
    <ligand>
        <name>1D-myo-inositol hexakisphosphate</name>
        <dbReference type="ChEBI" id="CHEBI:58130"/>
    </ligand>
</feature>
<feature type="binding site" evidence="1">
    <location>
        <begin position="397"/>
        <end position="399"/>
    </location>
    <ligand>
        <name>1D-myo-inositol hexakisphosphate</name>
        <dbReference type="ChEBI" id="CHEBI:58130"/>
    </ligand>
</feature>
<feature type="binding site" evidence="1">
    <location>
        <position position="432"/>
    </location>
    <ligand>
        <name>1D-myo-inositol hexakisphosphate</name>
        <dbReference type="ChEBI" id="CHEBI:58130"/>
    </ligand>
</feature>
<feature type="binding site" evidence="1">
    <location>
        <begin position="480"/>
        <end position="481"/>
    </location>
    <ligand>
        <name>1D-myo-inositol hexakisphosphate</name>
        <dbReference type="ChEBI" id="CHEBI:58130"/>
    </ligand>
</feature>
<feature type="binding site" evidence="1">
    <location>
        <position position="505"/>
    </location>
    <ligand>
        <name>1D-myo-inositol hexakisphosphate</name>
        <dbReference type="ChEBI" id="CHEBI:58130"/>
    </ligand>
</feature>
<feature type="site" description="Interaction with auxin-responsive proteins" evidence="1">
    <location>
        <position position="135"/>
    </location>
</feature>
<feature type="site" description="Interaction with auxin-responsive proteins" evidence="1">
    <location>
        <position position="161"/>
    </location>
</feature>
<feature type="site" description="Interaction with auxin-responsive proteins" evidence="1">
    <location>
        <position position="376"/>
    </location>
</feature>
<feature type="site" description="Interaction with auxin-responsive proteins" evidence="1">
    <location>
        <position position="485"/>
    </location>
</feature>
<feature type="sequence conflict" description="In Ref. 4; AAK76473." evidence="7" ref="4">
    <original>M</original>
    <variation>I</variation>
    <location>
        <position position="111"/>
    </location>
</feature>
<feature type="sequence conflict" description="In Ref. 1; AAK01147." evidence="7" ref="1">
    <original>A</original>
    <variation>S</variation>
    <location>
        <position position="149"/>
    </location>
</feature>
<feature type="sequence conflict" description="In Ref. 1; AAK01147." evidence="7" ref="1">
    <original>S</original>
    <variation>T</variation>
    <location>
        <position position="293"/>
    </location>
</feature>
<feature type="sequence conflict" description="In Ref. 4; AAK76473." evidence="7" ref="4">
    <original>C</original>
    <variation>S</variation>
    <location>
        <position position="377"/>
    </location>
</feature>
<feature type="sequence conflict" description="In Ref. 4; AAK76473." evidence="7" ref="4">
    <original>I</original>
    <variation>M</variation>
    <location>
        <position position="584"/>
    </location>
</feature>
<proteinExistence type="evidence at protein level"/>
<evidence type="ECO:0000250" key="1"/>
<evidence type="ECO:0000269" key="2">
    <source>
    </source>
</evidence>
<evidence type="ECO:0000269" key="3">
    <source>
    </source>
</evidence>
<evidence type="ECO:0000269" key="4">
    <source>
    </source>
</evidence>
<evidence type="ECO:0000269" key="5">
    <source>
    </source>
</evidence>
<evidence type="ECO:0000269" key="6">
    <source>
    </source>
</evidence>
<evidence type="ECO:0000305" key="7"/>
<gene>
    <name type="primary">GRH1</name>
    <name type="synonym">AFB1</name>
    <name type="synonym">FBL18</name>
    <name type="synonym">GER1</name>
    <name type="synonym">LRF1</name>
    <name type="ordered locus">At4g03190</name>
    <name type="ORF">F4C21.11</name>
</gene>